<reference key="1">
    <citation type="journal article" date="2000" name="Science">
        <title>The genome sequence of Drosophila melanogaster.</title>
        <authorList>
            <person name="Adams M.D."/>
            <person name="Celniker S.E."/>
            <person name="Holt R.A."/>
            <person name="Evans C.A."/>
            <person name="Gocayne J.D."/>
            <person name="Amanatides P.G."/>
            <person name="Scherer S.E."/>
            <person name="Li P.W."/>
            <person name="Hoskins R.A."/>
            <person name="Galle R.F."/>
            <person name="George R.A."/>
            <person name="Lewis S.E."/>
            <person name="Richards S."/>
            <person name="Ashburner M."/>
            <person name="Henderson S.N."/>
            <person name="Sutton G.G."/>
            <person name="Wortman J.R."/>
            <person name="Yandell M.D."/>
            <person name="Zhang Q."/>
            <person name="Chen L.X."/>
            <person name="Brandon R.C."/>
            <person name="Rogers Y.-H.C."/>
            <person name="Blazej R.G."/>
            <person name="Champe M."/>
            <person name="Pfeiffer B.D."/>
            <person name="Wan K.H."/>
            <person name="Doyle C."/>
            <person name="Baxter E.G."/>
            <person name="Helt G."/>
            <person name="Nelson C.R."/>
            <person name="Miklos G.L.G."/>
            <person name="Abril J.F."/>
            <person name="Agbayani A."/>
            <person name="An H.-J."/>
            <person name="Andrews-Pfannkoch C."/>
            <person name="Baldwin D."/>
            <person name="Ballew R.M."/>
            <person name="Basu A."/>
            <person name="Baxendale J."/>
            <person name="Bayraktaroglu L."/>
            <person name="Beasley E.M."/>
            <person name="Beeson K.Y."/>
            <person name="Benos P.V."/>
            <person name="Berman B.P."/>
            <person name="Bhandari D."/>
            <person name="Bolshakov S."/>
            <person name="Borkova D."/>
            <person name="Botchan M.R."/>
            <person name="Bouck J."/>
            <person name="Brokstein P."/>
            <person name="Brottier P."/>
            <person name="Burtis K.C."/>
            <person name="Busam D.A."/>
            <person name="Butler H."/>
            <person name="Cadieu E."/>
            <person name="Center A."/>
            <person name="Chandra I."/>
            <person name="Cherry J.M."/>
            <person name="Cawley S."/>
            <person name="Dahlke C."/>
            <person name="Davenport L.B."/>
            <person name="Davies P."/>
            <person name="de Pablos B."/>
            <person name="Delcher A."/>
            <person name="Deng Z."/>
            <person name="Mays A.D."/>
            <person name="Dew I."/>
            <person name="Dietz S.M."/>
            <person name="Dodson K."/>
            <person name="Doup L.E."/>
            <person name="Downes M."/>
            <person name="Dugan-Rocha S."/>
            <person name="Dunkov B.C."/>
            <person name="Dunn P."/>
            <person name="Durbin K.J."/>
            <person name="Evangelista C.C."/>
            <person name="Ferraz C."/>
            <person name="Ferriera S."/>
            <person name="Fleischmann W."/>
            <person name="Fosler C."/>
            <person name="Gabrielian A.E."/>
            <person name="Garg N.S."/>
            <person name="Gelbart W.M."/>
            <person name="Glasser K."/>
            <person name="Glodek A."/>
            <person name="Gong F."/>
            <person name="Gorrell J.H."/>
            <person name="Gu Z."/>
            <person name="Guan P."/>
            <person name="Harris M."/>
            <person name="Harris N.L."/>
            <person name="Harvey D.A."/>
            <person name="Heiman T.J."/>
            <person name="Hernandez J.R."/>
            <person name="Houck J."/>
            <person name="Hostin D."/>
            <person name="Houston K.A."/>
            <person name="Howland T.J."/>
            <person name="Wei M.-H."/>
            <person name="Ibegwam C."/>
            <person name="Jalali M."/>
            <person name="Kalush F."/>
            <person name="Karpen G.H."/>
            <person name="Ke Z."/>
            <person name="Kennison J.A."/>
            <person name="Ketchum K.A."/>
            <person name="Kimmel B.E."/>
            <person name="Kodira C.D."/>
            <person name="Kraft C.L."/>
            <person name="Kravitz S."/>
            <person name="Kulp D."/>
            <person name="Lai Z."/>
            <person name="Lasko P."/>
            <person name="Lei Y."/>
            <person name="Levitsky A.A."/>
            <person name="Li J.H."/>
            <person name="Li Z."/>
            <person name="Liang Y."/>
            <person name="Lin X."/>
            <person name="Liu X."/>
            <person name="Mattei B."/>
            <person name="McIntosh T.C."/>
            <person name="McLeod M.P."/>
            <person name="McPherson D."/>
            <person name="Merkulov G."/>
            <person name="Milshina N.V."/>
            <person name="Mobarry C."/>
            <person name="Morris J."/>
            <person name="Moshrefi A."/>
            <person name="Mount S.M."/>
            <person name="Moy M."/>
            <person name="Murphy B."/>
            <person name="Murphy L."/>
            <person name="Muzny D.M."/>
            <person name="Nelson D.L."/>
            <person name="Nelson D.R."/>
            <person name="Nelson K.A."/>
            <person name="Nixon K."/>
            <person name="Nusskern D.R."/>
            <person name="Pacleb J.M."/>
            <person name="Palazzolo M."/>
            <person name="Pittman G.S."/>
            <person name="Pan S."/>
            <person name="Pollard J."/>
            <person name="Puri V."/>
            <person name="Reese M.G."/>
            <person name="Reinert K."/>
            <person name="Remington K."/>
            <person name="Saunders R.D.C."/>
            <person name="Scheeler F."/>
            <person name="Shen H."/>
            <person name="Shue B.C."/>
            <person name="Siden-Kiamos I."/>
            <person name="Simpson M."/>
            <person name="Skupski M.P."/>
            <person name="Smith T.J."/>
            <person name="Spier E."/>
            <person name="Spradling A.C."/>
            <person name="Stapleton M."/>
            <person name="Strong R."/>
            <person name="Sun E."/>
            <person name="Svirskas R."/>
            <person name="Tector C."/>
            <person name="Turner R."/>
            <person name="Venter E."/>
            <person name="Wang A.H."/>
            <person name="Wang X."/>
            <person name="Wang Z.-Y."/>
            <person name="Wassarman D.A."/>
            <person name="Weinstock G.M."/>
            <person name="Weissenbach J."/>
            <person name="Williams S.M."/>
            <person name="Woodage T."/>
            <person name="Worley K.C."/>
            <person name="Wu D."/>
            <person name="Yang S."/>
            <person name="Yao Q.A."/>
            <person name="Ye J."/>
            <person name="Yeh R.-F."/>
            <person name="Zaveri J.S."/>
            <person name="Zhan M."/>
            <person name="Zhang G."/>
            <person name="Zhao Q."/>
            <person name="Zheng L."/>
            <person name="Zheng X.H."/>
            <person name="Zhong F.N."/>
            <person name="Zhong W."/>
            <person name="Zhou X."/>
            <person name="Zhu S.C."/>
            <person name="Zhu X."/>
            <person name="Smith H.O."/>
            <person name="Gibbs R.A."/>
            <person name="Myers E.W."/>
            <person name="Rubin G.M."/>
            <person name="Venter J.C."/>
        </authorList>
    </citation>
    <scope>NUCLEOTIDE SEQUENCE [LARGE SCALE GENOMIC DNA]</scope>
    <source>
        <strain>Berkeley</strain>
    </source>
</reference>
<reference key="2">
    <citation type="journal article" date="2002" name="Genome Biol.">
        <title>Annotation of the Drosophila melanogaster euchromatic genome: a systematic review.</title>
        <authorList>
            <person name="Misra S."/>
            <person name="Crosby M.A."/>
            <person name="Mungall C.J."/>
            <person name="Matthews B.B."/>
            <person name="Campbell K.S."/>
            <person name="Hradecky P."/>
            <person name="Huang Y."/>
            <person name="Kaminker J.S."/>
            <person name="Millburn G.H."/>
            <person name="Prochnik S.E."/>
            <person name="Smith C.D."/>
            <person name="Tupy J.L."/>
            <person name="Whitfield E.J."/>
            <person name="Bayraktaroglu L."/>
            <person name="Berman B.P."/>
            <person name="Bettencourt B.R."/>
            <person name="Celniker S.E."/>
            <person name="de Grey A.D.N.J."/>
            <person name="Drysdale R.A."/>
            <person name="Harris N.L."/>
            <person name="Richter J."/>
            <person name="Russo S."/>
            <person name="Schroeder A.J."/>
            <person name="Shu S.Q."/>
            <person name="Stapleton M."/>
            <person name="Yamada C."/>
            <person name="Ashburner M."/>
            <person name="Gelbart W.M."/>
            <person name="Rubin G.M."/>
            <person name="Lewis S.E."/>
        </authorList>
    </citation>
    <scope>GENOME REANNOTATION</scope>
    <source>
        <strain>Berkeley</strain>
    </source>
</reference>
<reference evidence="4" key="3">
    <citation type="submission" date="2001-12" db="EMBL/GenBank/DDBJ databases">
        <authorList>
            <person name="Stapleton M."/>
            <person name="Brokstein P."/>
            <person name="Hong L."/>
            <person name="Agbayani A."/>
            <person name="Carlson J."/>
            <person name="Champe M."/>
            <person name="Chavez C."/>
            <person name="Dorsett V."/>
            <person name="Dresnek D."/>
            <person name="Farfan D."/>
            <person name="Frise E."/>
            <person name="George R."/>
            <person name="Gonzalez M."/>
            <person name="Guarin H."/>
            <person name="Kronmiller B."/>
            <person name="Li P."/>
            <person name="Liao G."/>
            <person name="Miranda A."/>
            <person name="Mungall C.J."/>
            <person name="Nunoo J."/>
            <person name="Pacleb J."/>
            <person name="Paragas V."/>
            <person name="Park S."/>
            <person name="Patel S."/>
            <person name="Phouanenavong S."/>
            <person name="Wan K."/>
            <person name="Yu C."/>
            <person name="Lewis S.E."/>
            <person name="Rubin G.M."/>
            <person name="Celniker S."/>
        </authorList>
    </citation>
    <scope>NUCLEOTIDE SEQUENCE [LARGE SCALE MRNA]</scope>
    <source>
        <strain evidence="4">Berkeley</strain>
    </source>
</reference>
<reference evidence="3" key="4">
    <citation type="journal article" date="2013" name="Science">
        <title>Conserved regulation of cardiac calcium uptake by peptides encoded in small open reading frames.</title>
        <authorList>
            <person name="Magny E.G."/>
            <person name="Pueyo J.I."/>
            <person name="Pearl F.M."/>
            <person name="Cespedes M.A."/>
            <person name="Niven J.E."/>
            <person name="Bishop S.A."/>
            <person name="Couso J.P."/>
        </authorList>
    </citation>
    <scope>IDENTIFICATION</scope>
    <scope>FUNCTION</scope>
    <scope>INTERACTION WITH SERCA</scope>
    <scope>SUBCELLULAR LOCATION</scope>
    <scope>TISSUE SPECIFICITY</scope>
    <scope>DISRUPTION PHENOTYPE</scope>
</reference>
<protein>
    <recommendedName>
        <fullName evidence="5">Sarcolamban B</fullName>
    </recommendedName>
</protein>
<feature type="chain" id="PRO_0000426726" description="Sarcolamban B">
    <location>
        <begin position="1"/>
        <end position="29"/>
    </location>
</feature>
<feature type="transmembrane region" description="Helical" evidence="1">
    <location>
        <begin position="7"/>
        <end position="27"/>
    </location>
</feature>
<gene>
    <name evidence="5" type="primary">SclB</name>
    <name type="ORF">CG45091</name>
</gene>
<name>SLCB_DROME</name>
<dbReference type="EMBL" id="AE014134">
    <property type="protein sequence ID" value="AHN54504.1"/>
    <property type="molecule type" value="Genomic_DNA"/>
</dbReference>
<dbReference type="EMBL" id="AE014134">
    <property type="protein sequence ID" value="AHN54505.1"/>
    <property type="molecule type" value="Genomic_DNA"/>
</dbReference>
<dbReference type="EMBL" id="AE014134">
    <property type="protein sequence ID" value="AHN54506.1"/>
    <property type="molecule type" value="Genomic_DNA"/>
</dbReference>
<dbReference type="EMBL" id="AE014134">
    <property type="protein sequence ID" value="AHN54507.1"/>
    <property type="molecule type" value="Genomic_DNA"/>
</dbReference>
<dbReference type="EMBL" id="AY071248">
    <property type="protein sequence ID" value="AAL48870.1"/>
    <property type="status" value="ALT_SEQ"/>
    <property type="molecule type" value="mRNA"/>
</dbReference>
<dbReference type="RefSeq" id="NP_001285990.1">
    <property type="nucleotide sequence ID" value="NM_001299061.1"/>
</dbReference>
<dbReference type="RefSeq" id="NP_001285991.1">
    <property type="nucleotide sequence ID" value="NM_001299062.1"/>
</dbReference>
<dbReference type="RefSeq" id="NP_001285992.1">
    <property type="nucleotide sequence ID" value="NM_001299063.1"/>
</dbReference>
<dbReference type="RefSeq" id="NP_001285993.1">
    <property type="nucleotide sequence ID" value="NM_001299064.1"/>
</dbReference>
<dbReference type="BioGRID" id="2593745">
    <property type="interactions" value="1"/>
</dbReference>
<dbReference type="DIP" id="DIP-61733N"/>
<dbReference type="FunCoup" id="C0HJH3">
    <property type="interactions" value="1"/>
</dbReference>
<dbReference type="IntAct" id="C0HJH3">
    <property type="interactions" value="1"/>
</dbReference>
<dbReference type="STRING" id="7227.FBpp0310892"/>
<dbReference type="TCDB" id="8.A.199.1.2">
    <property type="family name" value="the sarcolamban (sarcolamban) family"/>
</dbReference>
<dbReference type="EnsemblMetazoa" id="FBtr0344539">
    <property type="protein sequence ID" value="FBpp0310891"/>
    <property type="gene ID" value="FBgn0266492"/>
</dbReference>
<dbReference type="EnsemblMetazoa" id="FBtr0344540">
    <property type="protein sequence ID" value="FBpp0310892"/>
    <property type="gene ID" value="FBgn0266492"/>
</dbReference>
<dbReference type="EnsemblMetazoa" id="FBtr0344541">
    <property type="protein sequence ID" value="FBpp0310893"/>
    <property type="gene ID" value="FBgn0266492"/>
</dbReference>
<dbReference type="EnsemblMetazoa" id="FBtr0344542">
    <property type="protein sequence ID" value="FBpp0310894"/>
    <property type="gene ID" value="FBgn0266492"/>
</dbReference>
<dbReference type="GeneID" id="19834948"/>
<dbReference type="KEGG" id="dme:Dmel_CG45091"/>
<dbReference type="AGR" id="FB:FBgn0266492"/>
<dbReference type="CTD" id="19834948"/>
<dbReference type="FlyBase" id="FBgn0266492">
    <property type="gene designation" value="SclB"/>
</dbReference>
<dbReference type="VEuPathDB" id="VectorBase:FBgn0266492"/>
<dbReference type="HOGENOM" id="CLU_221518_0_0_1"/>
<dbReference type="InParanoid" id="C0HJH3"/>
<dbReference type="BioGRID-ORCS" id="19834948">
    <property type="hits" value="0 hits in 1 CRISPR screen"/>
</dbReference>
<dbReference type="GenomeRNAi" id="19834948"/>
<dbReference type="PRO" id="PR:C0HJH3"/>
<dbReference type="Proteomes" id="UP000000803">
    <property type="component" value="Chromosome 2L"/>
</dbReference>
<dbReference type="Bgee" id="FBgn0266492">
    <property type="expression patterns" value="Expressed in cardial cell (Drosophila) in dorsal vessel heart and 20 other cell types or tissues"/>
</dbReference>
<dbReference type="GO" id="GO:0033017">
    <property type="term" value="C:sarcoplasmic reticulum membrane"/>
    <property type="evidence" value="ECO:0007669"/>
    <property type="project" value="UniProtKB-SubCell"/>
</dbReference>
<dbReference type="GO" id="GO:0055117">
    <property type="term" value="P:regulation of cardiac muscle contraction"/>
    <property type="evidence" value="ECO:0000315"/>
    <property type="project" value="FlyBase"/>
</dbReference>
<dbReference type="CDD" id="cd20274">
    <property type="entry name" value="Sarcolamban"/>
    <property type="match status" value="1"/>
</dbReference>
<dbReference type="InterPro" id="IPR054083">
    <property type="entry name" value="SclA/B"/>
</dbReference>
<dbReference type="Pfam" id="PF21898">
    <property type="entry name" value="Sarcolamban"/>
    <property type="match status" value="1"/>
</dbReference>
<evidence type="ECO:0000255" key="1"/>
<evidence type="ECO:0000269" key="2">
    <source>
    </source>
</evidence>
<evidence type="ECO:0000305" key="3"/>
<evidence type="ECO:0000312" key="4">
    <source>
        <dbReference type="EMBL" id="AAL48870.1"/>
    </source>
</evidence>
<evidence type="ECO:0000312" key="5">
    <source>
        <dbReference type="FlyBase" id="FBgn0266492"/>
    </source>
</evidence>
<accession>C0HJH3</accession>
<accession>Q8SYY2</accession>
<accession>X2JAM8</accession>
<comment type="function">
    <text evidence="2">Plays an essential role in the regulation of calcium transport at the sarcoplasmic reticulum (SR), which is secondarily required for regular muscle contraction.</text>
</comment>
<comment type="subunit">
    <text evidence="2">Interacts with SERCA.</text>
</comment>
<comment type="subcellular location">
    <subcellularLocation>
        <location evidence="2">Sarcoplasmic reticulum membrane</location>
        <topology evidence="2">Single-pass membrane protein</topology>
    </subcellularLocation>
    <text evidence="2">Colocalizes with SERCA at the sarcoplasmic reticulum and the diad, a structure composed of a single t-tubule paired with a terminal cisterna of the sarcoplasmic reticulum.</text>
</comment>
<comment type="tissue specificity">
    <text evidence="2">Strongly expressed in embryonic and larval somatic muscles and postembryonic heart.</text>
</comment>
<comment type="disruption phenotype">
    <text evidence="2">SclA and SclB double mutants show arrhythmic cardiac contractions and correspondingly, cardiac cells show irregular action potentials (APs), involving 'double' and occasionally failed APs. Calcium transients in these mutants show higher amplitudes and steeper decay than those in wild type flies.</text>
</comment>
<comment type="miscellaneous">
    <text evidence="3">This protein is produced by a bicistronic gene which also produces the SclA protein from a non-overlapping reading frame.</text>
</comment>
<comment type="sequence caution" evidence="3">
    <conflict type="erroneous translation">
        <sequence resource="EMBL-CDS" id="AAL48870"/>
    </conflict>
    <text>Wrong choice of frame.</text>
</comment>
<keyword id="KW-0472">Membrane</keyword>
<keyword id="KW-1185">Reference proteome</keyword>
<keyword id="KW-0703">Sarcoplasmic reticulum</keyword>
<keyword id="KW-0812">Transmembrane</keyword>
<keyword id="KW-1133">Transmembrane helix</keyword>
<organism>
    <name type="scientific">Drosophila melanogaster</name>
    <name type="common">Fruit fly</name>
    <dbReference type="NCBI Taxonomy" id="7227"/>
    <lineage>
        <taxon>Eukaryota</taxon>
        <taxon>Metazoa</taxon>
        <taxon>Ecdysozoa</taxon>
        <taxon>Arthropoda</taxon>
        <taxon>Hexapoda</taxon>
        <taxon>Insecta</taxon>
        <taxon>Pterygota</taxon>
        <taxon>Neoptera</taxon>
        <taxon>Endopterygota</taxon>
        <taxon>Diptera</taxon>
        <taxon>Brachycera</taxon>
        <taxon>Muscomorpha</taxon>
        <taxon>Ephydroidea</taxon>
        <taxon>Drosophilidae</taxon>
        <taxon>Drosophila</taxon>
        <taxon>Sophophora</taxon>
    </lineage>
</organism>
<proteinExistence type="evidence at protein level"/>
<sequence length="29" mass="3409">MNEAKSLFTTFLILAFLLFLLYAFYEAAF</sequence>